<accession>P0AC82</accession>
<accession>P77036</accession>
<accession>Q59384</accession>
<protein>
    <recommendedName>
        <fullName>Lactoylglutathione lyase</fullName>
        <ecNumber>4.4.1.5</ecNumber>
    </recommendedName>
    <alternativeName>
        <fullName>Aldoketomutase</fullName>
    </alternativeName>
    <alternativeName>
        <fullName>Glyoxalase I</fullName>
        <shortName>Glx I</shortName>
    </alternativeName>
    <alternativeName>
        <fullName>Ketone-aldehyde mutase</fullName>
    </alternativeName>
    <alternativeName>
        <fullName>Methylglyoxalase</fullName>
    </alternativeName>
    <alternativeName>
        <fullName>S-D-lactoylglutathione methylglyoxal lyase</fullName>
    </alternativeName>
</protein>
<dbReference type="EC" id="4.4.1.5"/>
<dbReference type="EMBL" id="AE005174">
    <property type="protein sequence ID" value="AAG56640.1"/>
    <property type="molecule type" value="Genomic_DNA"/>
</dbReference>
<dbReference type="EMBL" id="BA000007">
    <property type="protein sequence ID" value="BAB35783.1"/>
    <property type="molecule type" value="Genomic_DNA"/>
</dbReference>
<dbReference type="PIR" id="D85772">
    <property type="entry name" value="D85772"/>
</dbReference>
<dbReference type="PIR" id="H90923">
    <property type="entry name" value="H90923"/>
</dbReference>
<dbReference type="RefSeq" id="NP_310387.1">
    <property type="nucleotide sequence ID" value="NC_002695.1"/>
</dbReference>
<dbReference type="RefSeq" id="WP_001237796.1">
    <property type="nucleotide sequence ID" value="NZ_VOAI01000007.1"/>
</dbReference>
<dbReference type="SMR" id="P0AC82"/>
<dbReference type="STRING" id="155864.Z2669"/>
<dbReference type="GeneID" id="912789"/>
<dbReference type="GeneID" id="93775805"/>
<dbReference type="KEGG" id="ece:Z2669"/>
<dbReference type="KEGG" id="ecs:ECs_2360"/>
<dbReference type="PATRIC" id="fig|386585.9.peg.2469"/>
<dbReference type="eggNOG" id="COG0346">
    <property type="taxonomic scope" value="Bacteria"/>
</dbReference>
<dbReference type="HOGENOM" id="CLU_046006_8_1_6"/>
<dbReference type="OMA" id="THNWDTP"/>
<dbReference type="UniPathway" id="UPA00619">
    <property type="reaction ID" value="UER00675"/>
</dbReference>
<dbReference type="Proteomes" id="UP000000558">
    <property type="component" value="Chromosome"/>
</dbReference>
<dbReference type="Proteomes" id="UP000002519">
    <property type="component" value="Chromosome"/>
</dbReference>
<dbReference type="GO" id="GO:0005737">
    <property type="term" value="C:cytoplasm"/>
    <property type="evidence" value="ECO:0007669"/>
    <property type="project" value="TreeGrafter"/>
</dbReference>
<dbReference type="GO" id="GO:0004462">
    <property type="term" value="F:lactoylglutathione lyase activity"/>
    <property type="evidence" value="ECO:0007669"/>
    <property type="project" value="UniProtKB-EC"/>
</dbReference>
<dbReference type="GO" id="GO:0046872">
    <property type="term" value="F:metal ion binding"/>
    <property type="evidence" value="ECO:0007669"/>
    <property type="project" value="UniProtKB-KW"/>
</dbReference>
<dbReference type="GO" id="GO:0019243">
    <property type="term" value="P:methylglyoxal catabolic process to D-lactate via S-lactoyl-glutathione"/>
    <property type="evidence" value="ECO:0007669"/>
    <property type="project" value="TreeGrafter"/>
</dbReference>
<dbReference type="CDD" id="cd16358">
    <property type="entry name" value="GlxI_Ni"/>
    <property type="match status" value="1"/>
</dbReference>
<dbReference type="FunFam" id="3.10.180.10:FF:000002">
    <property type="entry name" value="Lactoylglutathione lyase"/>
    <property type="match status" value="1"/>
</dbReference>
<dbReference type="Gene3D" id="3.10.180.10">
    <property type="entry name" value="2,3-Dihydroxybiphenyl 1,2-Dioxygenase, domain 1"/>
    <property type="match status" value="1"/>
</dbReference>
<dbReference type="InterPro" id="IPR029068">
    <property type="entry name" value="Glyas_Bleomycin-R_OHBP_Dase"/>
</dbReference>
<dbReference type="InterPro" id="IPR004360">
    <property type="entry name" value="Glyas_Fos-R_dOase_dom"/>
</dbReference>
<dbReference type="InterPro" id="IPR004361">
    <property type="entry name" value="Glyoxalase_1"/>
</dbReference>
<dbReference type="InterPro" id="IPR018146">
    <property type="entry name" value="Glyoxalase_1_CS"/>
</dbReference>
<dbReference type="InterPro" id="IPR037523">
    <property type="entry name" value="VOC"/>
</dbReference>
<dbReference type="NCBIfam" id="TIGR00068">
    <property type="entry name" value="glyox_I"/>
    <property type="match status" value="1"/>
</dbReference>
<dbReference type="NCBIfam" id="NF007629">
    <property type="entry name" value="PRK10291.1"/>
    <property type="match status" value="1"/>
</dbReference>
<dbReference type="PANTHER" id="PTHR46036">
    <property type="entry name" value="LACTOYLGLUTATHIONE LYASE"/>
    <property type="match status" value="1"/>
</dbReference>
<dbReference type="PANTHER" id="PTHR46036:SF5">
    <property type="entry name" value="LACTOYLGLUTATHIONE LYASE"/>
    <property type="match status" value="1"/>
</dbReference>
<dbReference type="Pfam" id="PF00903">
    <property type="entry name" value="Glyoxalase"/>
    <property type="match status" value="1"/>
</dbReference>
<dbReference type="SUPFAM" id="SSF54593">
    <property type="entry name" value="Glyoxalase/Bleomycin resistance protein/Dihydroxybiphenyl dioxygenase"/>
    <property type="match status" value="1"/>
</dbReference>
<dbReference type="PROSITE" id="PS00934">
    <property type="entry name" value="GLYOXALASE_I_1"/>
    <property type="match status" value="1"/>
</dbReference>
<dbReference type="PROSITE" id="PS00935">
    <property type="entry name" value="GLYOXALASE_I_2"/>
    <property type="match status" value="1"/>
</dbReference>
<dbReference type="PROSITE" id="PS51819">
    <property type="entry name" value="VOC"/>
    <property type="match status" value="1"/>
</dbReference>
<comment type="function">
    <text evidence="1">Catalyzes the conversion of hemimercaptal, formed from methylglyoxal and glutathione, to S-lactoylglutathione.</text>
</comment>
<comment type="catalytic activity">
    <reaction>
        <text>(R)-S-lactoylglutathione = methylglyoxal + glutathione</text>
        <dbReference type="Rhea" id="RHEA:19069"/>
        <dbReference type="ChEBI" id="CHEBI:17158"/>
        <dbReference type="ChEBI" id="CHEBI:57474"/>
        <dbReference type="ChEBI" id="CHEBI:57925"/>
        <dbReference type="EC" id="4.4.1.5"/>
    </reaction>
</comment>
<comment type="cofactor">
    <cofactor evidence="1">
        <name>Ni(2+)</name>
        <dbReference type="ChEBI" id="CHEBI:49786"/>
    </cofactor>
    <text evidence="1">Binds 1 nickel ion per subunit. In the homodimer, two nickel ions are bound between subunits.</text>
</comment>
<comment type="pathway">
    <text>Secondary metabolite metabolism; methylglyoxal degradation; (R)-lactate from methylglyoxal: step 1/2.</text>
</comment>
<comment type="subunit">
    <text evidence="1">Homodimer.</text>
</comment>
<comment type="similarity">
    <text evidence="3">Belongs to the glyoxalase I family.</text>
</comment>
<keyword id="KW-0456">Lyase</keyword>
<keyword id="KW-0479">Metal-binding</keyword>
<keyword id="KW-0533">Nickel</keyword>
<keyword id="KW-1185">Reference proteome</keyword>
<feature type="chain" id="PRO_0000168089" description="Lactoylglutathione lyase">
    <location>
        <begin position="1"/>
        <end position="135"/>
    </location>
</feature>
<feature type="domain" description="VOC" evidence="2">
    <location>
        <begin position="2"/>
        <end position="126"/>
    </location>
</feature>
<feature type="active site" description="Proton donor/acceptor" evidence="1">
    <location>
        <position position="122"/>
    </location>
</feature>
<feature type="binding site" evidence="1">
    <location>
        <position position="5"/>
    </location>
    <ligand>
        <name>Ni(2+)</name>
        <dbReference type="ChEBI" id="CHEBI:49786"/>
        <note>ligand shared between dimeric partners</note>
    </ligand>
</feature>
<feature type="binding site" evidence="1">
    <location>
        <position position="9"/>
    </location>
    <ligand>
        <name>substrate</name>
        <note>ligand shared between dimeric partners</note>
    </ligand>
</feature>
<feature type="binding site" evidence="1">
    <location>
        <position position="56"/>
    </location>
    <ligand>
        <name>Ni(2+)</name>
        <dbReference type="ChEBI" id="CHEBI:49786"/>
        <note>ligand shared between dimeric partners</note>
    </ligand>
</feature>
<feature type="binding site" evidence="1">
    <location>
        <position position="60"/>
    </location>
    <ligand>
        <name>substrate</name>
        <note>ligand shared between dimeric partners</note>
    </ligand>
</feature>
<feature type="binding site" description="in other chain" evidence="1">
    <location>
        <position position="74"/>
    </location>
    <ligand>
        <name>Ni(2+)</name>
        <dbReference type="ChEBI" id="CHEBI:49786"/>
        <note>ligand shared between dimeric partners</note>
    </ligand>
</feature>
<feature type="binding site" description="in other chain" evidence="1">
    <location>
        <position position="74"/>
    </location>
    <ligand>
        <name>substrate</name>
        <note>ligand shared between dimeric partners</note>
    </ligand>
</feature>
<feature type="binding site" description="in other chain" evidence="1">
    <location>
        <position position="122"/>
    </location>
    <ligand>
        <name>Ni(2+)</name>
        <dbReference type="ChEBI" id="CHEBI:49786"/>
        <note>ligand shared between dimeric partners</note>
    </ligand>
</feature>
<name>LGUL_ECO57</name>
<evidence type="ECO:0000250" key="1"/>
<evidence type="ECO:0000255" key="2">
    <source>
        <dbReference type="PROSITE-ProRule" id="PRU01163"/>
    </source>
</evidence>
<evidence type="ECO:0000305" key="3"/>
<gene>
    <name type="primary">gloA</name>
    <name type="ordered locus">Z2669</name>
    <name type="ordered locus">ECs2360</name>
</gene>
<organism>
    <name type="scientific">Escherichia coli O157:H7</name>
    <dbReference type="NCBI Taxonomy" id="83334"/>
    <lineage>
        <taxon>Bacteria</taxon>
        <taxon>Pseudomonadati</taxon>
        <taxon>Pseudomonadota</taxon>
        <taxon>Gammaproteobacteria</taxon>
        <taxon>Enterobacterales</taxon>
        <taxon>Enterobacteriaceae</taxon>
        <taxon>Escherichia</taxon>
    </lineage>
</organism>
<sequence>MRLLHTMLRVGDLQRSIDFYTKVLGMKLLRTSENPEYKYSLAFVGYGPETEEAVIELTYNWGVDKYELGTAYGHIALSVDNAAEACEKIRQNGGNVTREAGPVKGGTTVIAFVEDPDGYKIELIEEKDAGRGLGN</sequence>
<proteinExistence type="inferred from homology"/>
<reference key="1">
    <citation type="journal article" date="2001" name="Nature">
        <title>Genome sequence of enterohaemorrhagic Escherichia coli O157:H7.</title>
        <authorList>
            <person name="Perna N.T."/>
            <person name="Plunkett G. III"/>
            <person name="Burland V."/>
            <person name="Mau B."/>
            <person name="Glasner J.D."/>
            <person name="Rose D.J."/>
            <person name="Mayhew G.F."/>
            <person name="Evans P.S."/>
            <person name="Gregor J."/>
            <person name="Kirkpatrick H.A."/>
            <person name="Posfai G."/>
            <person name="Hackett J."/>
            <person name="Klink S."/>
            <person name="Boutin A."/>
            <person name="Shao Y."/>
            <person name="Miller L."/>
            <person name="Grotbeck E.J."/>
            <person name="Davis N.W."/>
            <person name="Lim A."/>
            <person name="Dimalanta E.T."/>
            <person name="Potamousis K."/>
            <person name="Apodaca J."/>
            <person name="Anantharaman T.S."/>
            <person name="Lin J."/>
            <person name="Yen G."/>
            <person name="Schwartz D.C."/>
            <person name="Welch R.A."/>
            <person name="Blattner F.R."/>
        </authorList>
    </citation>
    <scope>NUCLEOTIDE SEQUENCE [LARGE SCALE GENOMIC DNA]</scope>
    <source>
        <strain>O157:H7 / EDL933 / ATCC 700927 / EHEC</strain>
    </source>
</reference>
<reference key="2">
    <citation type="journal article" date="2001" name="DNA Res.">
        <title>Complete genome sequence of enterohemorrhagic Escherichia coli O157:H7 and genomic comparison with a laboratory strain K-12.</title>
        <authorList>
            <person name="Hayashi T."/>
            <person name="Makino K."/>
            <person name="Ohnishi M."/>
            <person name="Kurokawa K."/>
            <person name="Ishii K."/>
            <person name="Yokoyama K."/>
            <person name="Han C.-G."/>
            <person name="Ohtsubo E."/>
            <person name="Nakayama K."/>
            <person name="Murata T."/>
            <person name="Tanaka M."/>
            <person name="Tobe T."/>
            <person name="Iida T."/>
            <person name="Takami H."/>
            <person name="Honda T."/>
            <person name="Sasakawa C."/>
            <person name="Ogasawara N."/>
            <person name="Yasunaga T."/>
            <person name="Kuhara S."/>
            <person name="Shiba T."/>
            <person name="Hattori M."/>
            <person name="Shinagawa H."/>
        </authorList>
    </citation>
    <scope>NUCLEOTIDE SEQUENCE [LARGE SCALE GENOMIC DNA]</scope>
    <source>
        <strain>O157:H7 / Sakai / RIMD 0509952 / EHEC</strain>
    </source>
</reference>